<protein>
    <recommendedName>
        <fullName>Transcription initiation factor TFIID subunit 4</fullName>
    </recommendedName>
    <alternativeName>
        <fullName>TBP-associated factor 4</fullName>
    </alternativeName>
</protein>
<keyword id="KW-0175">Coiled coil</keyword>
<keyword id="KW-0539">Nucleus</keyword>
<keyword id="KW-1185">Reference proteome</keyword>
<keyword id="KW-0804">Transcription</keyword>
<keyword id="KW-0805">Transcription regulation</keyword>
<name>TAF4_SCHPO</name>
<accession>Q9P7S4</accession>
<evidence type="ECO:0000250" key="1"/>
<evidence type="ECO:0000255" key="2"/>
<evidence type="ECO:0000256" key="3">
    <source>
        <dbReference type="SAM" id="MobiDB-lite"/>
    </source>
</evidence>
<evidence type="ECO:0000269" key="4">
    <source>
    </source>
</evidence>
<evidence type="ECO:0000305" key="5"/>
<feature type="chain" id="PRO_0000343443" description="Transcription initiation factor TFIID subunit 4">
    <location>
        <begin position="1"/>
        <end position="365"/>
    </location>
</feature>
<feature type="domain" description="Histone-fold">
    <location>
        <begin position="164"/>
        <end position="227"/>
    </location>
</feature>
<feature type="region of interest" description="Disordered" evidence="3">
    <location>
        <begin position="1"/>
        <end position="76"/>
    </location>
</feature>
<feature type="region of interest" description="Disordered" evidence="3">
    <location>
        <begin position="225"/>
        <end position="259"/>
    </location>
</feature>
<feature type="coiled-coil region" evidence="2">
    <location>
        <begin position="202"/>
        <end position="236"/>
    </location>
</feature>
<feature type="compositionally biased region" description="Low complexity" evidence="3">
    <location>
        <begin position="63"/>
        <end position="73"/>
    </location>
</feature>
<dbReference type="EMBL" id="CU329670">
    <property type="protein sequence ID" value="CAB72234.1"/>
    <property type="molecule type" value="Genomic_DNA"/>
</dbReference>
<dbReference type="PIR" id="T50183">
    <property type="entry name" value="T50183"/>
</dbReference>
<dbReference type="RefSeq" id="NP_593109.1">
    <property type="nucleotide sequence ID" value="NM_001018506.2"/>
</dbReference>
<dbReference type="BioGRID" id="278215">
    <property type="interactions" value="17"/>
</dbReference>
<dbReference type="FunCoup" id="Q9P7S4">
    <property type="interactions" value="20"/>
</dbReference>
<dbReference type="STRING" id="284812.Q9P7S4"/>
<dbReference type="iPTMnet" id="Q9P7S4"/>
<dbReference type="PaxDb" id="4896-SPAC23G3.09.1"/>
<dbReference type="EnsemblFungi" id="SPAC23G3.09.1">
    <property type="protein sequence ID" value="SPAC23G3.09.1:pep"/>
    <property type="gene ID" value="SPAC23G3.09"/>
</dbReference>
<dbReference type="GeneID" id="2541721"/>
<dbReference type="KEGG" id="spo:2541721"/>
<dbReference type="PomBase" id="SPAC23G3.09">
    <property type="gene designation" value="taf4"/>
</dbReference>
<dbReference type="VEuPathDB" id="FungiDB:SPAC23G3.09"/>
<dbReference type="eggNOG" id="KOG2341">
    <property type="taxonomic scope" value="Eukaryota"/>
</dbReference>
<dbReference type="HOGENOM" id="CLU_759021_0_0_1"/>
<dbReference type="InParanoid" id="Q9P7S4"/>
<dbReference type="OMA" id="KYSWMAT"/>
<dbReference type="PhylomeDB" id="Q9P7S4"/>
<dbReference type="PRO" id="PR:Q9P7S4"/>
<dbReference type="Proteomes" id="UP000002485">
    <property type="component" value="Chromosome I"/>
</dbReference>
<dbReference type="GO" id="GO:0000785">
    <property type="term" value="C:chromatin"/>
    <property type="evidence" value="ECO:0000305"/>
    <property type="project" value="PomBase"/>
</dbReference>
<dbReference type="GO" id="GO:0005634">
    <property type="term" value="C:nucleus"/>
    <property type="evidence" value="ECO:0007005"/>
    <property type="project" value="PomBase"/>
</dbReference>
<dbReference type="GO" id="GO:0005669">
    <property type="term" value="C:transcription factor TFIID complex"/>
    <property type="evidence" value="ECO:0000314"/>
    <property type="project" value="PomBase"/>
</dbReference>
<dbReference type="GO" id="GO:0046982">
    <property type="term" value="F:protein heterodimerization activity"/>
    <property type="evidence" value="ECO:0007669"/>
    <property type="project" value="InterPro"/>
</dbReference>
<dbReference type="GO" id="GO:0016251">
    <property type="term" value="F:RNA polymerase II general transcription initiation factor activity"/>
    <property type="evidence" value="ECO:0000269"/>
    <property type="project" value="PomBase"/>
</dbReference>
<dbReference type="GO" id="GO:0051123">
    <property type="term" value="P:RNA polymerase II preinitiation complex assembly"/>
    <property type="evidence" value="ECO:0000266"/>
    <property type="project" value="PomBase"/>
</dbReference>
<dbReference type="GO" id="GO:0006367">
    <property type="term" value="P:transcription initiation at RNA polymerase II promoter"/>
    <property type="evidence" value="ECO:0000269"/>
    <property type="project" value="PomBase"/>
</dbReference>
<dbReference type="CDD" id="cd08045">
    <property type="entry name" value="HFD_TAF4"/>
    <property type="match status" value="1"/>
</dbReference>
<dbReference type="Gene3D" id="1.10.20.10">
    <property type="entry name" value="Histone, subunit A"/>
    <property type="match status" value="1"/>
</dbReference>
<dbReference type="InterPro" id="IPR009072">
    <property type="entry name" value="Histone-fold"/>
</dbReference>
<dbReference type="InterPro" id="IPR045144">
    <property type="entry name" value="TAF4"/>
</dbReference>
<dbReference type="InterPro" id="IPR007900">
    <property type="entry name" value="TAF4_C"/>
</dbReference>
<dbReference type="PANTHER" id="PTHR15138">
    <property type="entry name" value="TRANSCRIPTION INITIATION FACTOR TFIID SUBUNIT 4"/>
    <property type="match status" value="1"/>
</dbReference>
<dbReference type="PANTHER" id="PTHR15138:SF14">
    <property type="entry name" value="TRANSCRIPTION INITIATION FACTOR TFIID SUBUNIT 4"/>
    <property type="match status" value="1"/>
</dbReference>
<dbReference type="Pfam" id="PF05236">
    <property type="entry name" value="TAF4"/>
    <property type="match status" value="1"/>
</dbReference>
<organism>
    <name type="scientific">Schizosaccharomyces pombe (strain 972 / ATCC 24843)</name>
    <name type="common">Fission yeast</name>
    <dbReference type="NCBI Taxonomy" id="284812"/>
    <lineage>
        <taxon>Eukaryota</taxon>
        <taxon>Fungi</taxon>
        <taxon>Dikarya</taxon>
        <taxon>Ascomycota</taxon>
        <taxon>Taphrinomycotina</taxon>
        <taxon>Schizosaccharomycetes</taxon>
        <taxon>Schizosaccharomycetales</taxon>
        <taxon>Schizosaccharomycetaceae</taxon>
        <taxon>Schizosaccharomyces</taxon>
    </lineage>
</organism>
<comment type="function">
    <text evidence="1">Functions as a component of the DNA-binding general transcription factor complex TFIID. Binding of TFIID to a promoter (with or without TATA element) is the initial step in pre-initiation complex (PIC) formation. TFIID plays a key role in the regulation of gene expression by RNA polymerase II through different activities such as transcription activator interaction, core promoter recognition and selectivity, TFIIA and TFIIB interaction, chromatin modification (histone acetylation by taf1), facilitation of DNA opening and initiation of transcription (By similarity).</text>
</comment>
<comment type="subunit">
    <text evidence="1">The 1.2 MDa TFIID complex is composed of TATA binding protein (TBP) and the 14 TBP-associated factors.</text>
</comment>
<comment type="subcellular location">
    <subcellularLocation>
        <location evidence="4">Nucleus</location>
    </subcellularLocation>
</comment>
<comment type="similarity">
    <text evidence="5">Belongs to the TAF4 family.</text>
</comment>
<reference key="1">
    <citation type="journal article" date="2002" name="Nature">
        <title>The genome sequence of Schizosaccharomyces pombe.</title>
        <authorList>
            <person name="Wood V."/>
            <person name="Gwilliam R."/>
            <person name="Rajandream M.A."/>
            <person name="Lyne M.H."/>
            <person name="Lyne R."/>
            <person name="Stewart A."/>
            <person name="Sgouros J.G."/>
            <person name="Peat N."/>
            <person name="Hayles J."/>
            <person name="Baker S.G."/>
            <person name="Basham D."/>
            <person name="Bowman S."/>
            <person name="Brooks K."/>
            <person name="Brown D."/>
            <person name="Brown S."/>
            <person name="Chillingworth T."/>
            <person name="Churcher C.M."/>
            <person name="Collins M."/>
            <person name="Connor R."/>
            <person name="Cronin A."/>
            <person name="Davis P."/>
            <person name="Feltwell T."/>
            <person name="Fraser A."/>
            <person name="Gentles S."/>
            <person name="Goble A."/>
            <person name="Hamlin N."/>
            <person name="Harris D.E."/>
            <person name="Hidalgo J."/>
            <person name="Hodgson G."/>
            <person name="Holroyd S."/>
            <person name="Hornsby T."/>
            <person name="Howarth S."/>
            <person name="Huckle E.J."/>
            <person name="Hunt S."/>
            <person name="Jagels K."/>
            <person name="James K.D."/>
            <person name="Jones L."/>
            <person name="Jones M."/>
            <person name="Leather S."/>
            <person name="McDonald S."/>
            <person name="McLean J."/>
            <person name="Mooney P."/>
            <person name="Moule S."/>
            <person name="Mungall K.L."/>
            <person name="Murphy L.D."/>
            <person name="Niblett D."/>
            <person name="Odell C."/>
            <person name="Oliver K."/>
            <person name="O'Neil S."/>
            <person name="Pearson D."/>
            <person name="Quail M.A."/>
            <person name="Rabbinowitsch E."/>
            <person name="Rutherford K.M."/>
            <person name="Rutter S."/>
            <person name="Saunders D."/>
            <person name="Seeger K."/>
            <person name="Sharp S."/>
            <person name="Skelton J."/>
            <person name="Simmonds M.N."/>
            <person name="Squares R."/>
            <person name="Squares S."/>
            <person name="Stevens K."/>
            <person name="Taylor K."/>
            <person name="Taylor R.G."/>
            <person name="Tivey A."/>
            <person name="Walsh S.V."/>
            <person name="Warren T."/>
            <person name="Whitehead S."/>
            <person name="Woodward J.R."/>
            <person name="Volckaert G."/>
            <person name="Aert R."/>
            <person name="Robben J."/>
            <person name="Grymonprez B."/>
            <person name="Weltjens I."/>
            <person name="Vanstreels E."/>
            <person name="Rieger M."/>
            <person name="Schaefer M."/>
            <person name="Mueller-Auer S."/>
            <person name="Gabel C."/>
            <person name="Fuchs M."/>
            <person name="Duesterhoeft A."/>
            <person name="Fritzc C."/>
            <person name="Holzer E."/>
            <person name="Moestl D."/>
            <person name="Hilbert H."/>
            <person name="Borzym K."/>
            <person name="Langer I."/>
            <person name="Beck A."/>
            <person name="Lehrach H."/>
            <person name="Reinhardt R."/>
            <person name="Pohl T.M."/>
            <person name="Eger P."/>
            <person name="Zimmermann W."/>
            <person name="Wedler H."/>
            <person name="Wambutt R."/>
            <person name="Purnelle B."/>
            <person name="Goffeau A."/>
            <person name="Cadieu E."/>
            <person name="Dreano S."/>
            <person name="Gloux S."/>
            <person name="Lelaure V."/>
            <person name="Mottier S."/>
            <person name="Galibert F."/>
            <person name="Aves S.J."/>
            <person name="Xiang Z."/>
            <person name="Hunt C."/>
            <person name="Moore K."/>
            <person name="Hurst S.M."/>
            <person name="Lucas M."/>
            <person name="Rochet M."/>
            <person name="Gaillardin C."/>
            <person name="Tallada V.A."/>
            <person name="Garzon A."/>
            <person name="Thode G."/>
            <person name="Daga R.R."/>
            <person name="Cruzado L."/>
            <person name="Jimenez J."/>
            <person name="Sanchez M."/>
            <person name="del Rey F."/>
            <person name="Benito J."/>
            <person name="Dominguez A."/>
            <person name="Revuelta J.L."/>
            <person name="Moreno S."/>
            <person name="Armstrong J."/>
            <person name="Forsburg S.L."/>
            <person name="Cerutti L."/>
            <person name="Lowe T."/>
            <person name="McCombie W.R."/>
            <person name="Paulsen I."/>
            <person name="Potashkin J."/>
            <person name="Shpakovski G.V."/>
            <person name="Ussery D."/>
            <person name="Barrell B.G."/>
            <person name="Nurse P."/>
        </authorList>
    </citation>
    <scope>NUCLEOTIDE SEQUENCE [LARGE SCALE GENOMIC DNA]</scope>
    <source>
        <strain>972 / ATCC 24843</strain>
    </source>
</reference>
<reference key="2">
    <citation type="journal article" date="2006" name="Nat. Biotechnol.">
        <title>ORFeome cloning and global analysis of protein localization in the fission yeast Schizosaccharomyces pombe.</title>
        <authorList>
            <person name="Matsuyama A."/>
            <person name="Arai R."/>
            <person name="Yashiroda Y."/>
            <person name="Shirai A."/>
            <person name="Kamata A."/>
            <person name="Sekido S."/>
            <person name="Kobayashi Y."/>
            <person name="Hashimoto A."/>
            <person name="Hamamoto M."/>
            <person name="Hiraoka Y."/>
            <person name="Horinouchi S."/>
            <person name="Yoshida M."/>
        </authorList>
    </citation>
    <scope>SUBCELLULAR LOCATION [LARGE SCALE ANALYSIS]</scope>
</reference>
<gene>
    <name type="primary">taf4</name>
    <name type="ORF">SPAC23G3.09</name>
</gene>
<proteinExistence type="inferred from homology"/>
<sequence length="365" mass="40546">MDLNNPPSKRFGDDDDIPANKRPKNEEYPEIPGYLGNRKPSYTQNPNSGPGKLHYASPRPNNVSSSVGVASGGDRQEADQLQDALISCGIQLKEEELNLSTSFYDPSSLNTFALTTEDRSRKSDFLNSFVLMQTVSNIVNLHRLKSMDSDIHALISMAVRDYLANLLQKMIVESHHRTSQLHTDNYKQVDNVRQTLANFAYKEYESEERRRTVLNIRRAEHEARLAELNSASTNEEGSSRRRKEQSSSAAAKNISEDAQNRMTNATASIMAGSALPSGGKKYSWMATDMTPMTPAVGGGFGIRKKDSNSLKPSSRDGVLPLQQEEKGIITIRDALAVLEMDREGAGRIFGRGAKAMMRAYIRLKD</sequence>